<proteinExistence type="evidence at protein level"/>
<organism>
    <name type="scientific">Saccharomyces cerevisiae (strain ATCC 204508 / S288c)</name>
    <name type="common">Baker's yeast</name>
    <dbReference type="NCBI Taxonomy" id="559292"/>
    <lineage>
        <taxon>Eukaryota</taxon>
        <taxon>Fungi</taxon>
        <taxon>Dikarya</taxon>
        <taxon>Ascomycota</taxon>
        <taxon>Saccharomycotina</taxon>
        <taxon>Saccharomycetes</taxon>
        <taxon>Saccharomycetales</taxon>
        <taxon>Saccharomycetaceae</taxon>
        <taxon>Saccharomyces</taxon>
    </lineage>
</organism>
<reference key="1">
    <citation type="journal article" date="1997" name="Yeast">
        <title>Sequence analysis of a 33.2 kb segment from the left arm of yeast chromosome XV reveals eight known genes and ten new open reading frames including homologues of ABC transporters, inositol phosphatases and human expressed sequence tags.</title>
        <authorList>
            <person name="Tzermia M."/>
            <person name="Katsoulou C."/>
            <person name="Alexandraki D."/>
        </authorList>
    </citation>
    <scope>NUCLEOTIDE SEQUENCE [GENOMIC DNA]</scope>
    <source>
        <strain>ATCC 96604 / S288c / FY1679</strain>
    </source>
</reference>
<reference key="2">
    <citation type="journal article" date="1997" name="Nature">
        <title>The nucleotide sequence of Saccharomyces cerevisiae chromosome XV.</title>
        <authorList>
            <person name="Dujon B."/>
            <person name="Albermann K."/>
            <person name="Aldea M."/>
            <person name="Alexandraki D."/>
            <person name="Ansorge W."/>
            <person name="Arino J."/>
            <person name="Benes V."/>
            <person name="Bohn C."/>
            <person name="Bolotin-Fukuhara M."/>
            <person name="Bordonne R."/>
            <person name="Boyer J."/>
            <person name="Camasses A."/>
            <person name="Casamayor A."/>
            <person name="Casas C."/>
            <person name="Cheret G."/>
            <person name="Cziepluch C."/>
            <person name="Daignan-Fornier B."/>
            <person name="Dang V.-D."/>
            <person name="de Haan M."/>
            <person name="Delius H."/>
            <person name="Durand P."/>
            <person name="Fairhead C."/>
            <person name="Feldmann H."/>
            <person name="Gaillon L."/>
            <person name="Galisson F."/>
            <person name="Gamo F.-J."/>
            <person name="Gancedo C."/>
            <person name="Goffeau A."/>
            <person name="Goulding S.E."/>
            <person name="Grivell L.A."/>
            <person name="Habbig B."/>
            <person name="Hand N.J."/>
            <person name="Hani J."/>
            <person name="Hattenhorst U."/>
            <person name="Hebling U."/>
            <person name="Hernando Y."/>
            <person name="Herrero E."/>
            <person name="Heumann K."/>
            <person name="Hiesel R."/>
            <person name="Hilger F."/>
            <person name="Hofmann B."/>
            <person name="Hollenberg C.P."/>
            <person name="Hughes B."/>
            <person name="Jauniaux J.-C."/>
            <person name="Kalogeropoulos A."/>
            <person name="Katsoulou C."/>
            <person name="Kordes E."/>
            <person name="Lafuente M.J."/>
            <person name="Landt O."/>
            <person name="Louis E.J."/>
            <person name="Maarse A.C."/>
            <person name="Madania A."/>
            <person name="Mannhaupt G."/>
            <person name="Marck C."/>
            <person name="Martin R.P."/>
            <person name="Mewes H.-W."/>
            <person name="Michaux G."/>
            <person name="Paces V."/>
            <person name="Parle-McDermott A.G."/>
            <person name="Pearson B.M."/>
            <person name="Perrin A."/>
            <person name="Pettersson B."/>
            <person name="Poch O."/>
            <person name="Pohl T.M."/>
            <person name="Poirey R."/>
            <person name="Portetelle D."/>
            <person name="Pujol A."/>
            <person name="Purnelle B."/>
            <person name="Ramezani Rad M."/>
            <person name="Rechmann S."/>
            <person name="Schwager C."/>
            <person name="Schweizer M."/>
            <person name="Sor F."/>
            <person name="Sterky F."/>
            <person name="Tarassov I.A."/>
            <person name="Teodoru C."/>
            <person name="Tettelin H."/>
            <person name="Thierry A."/>
            <person name="Tobiasch E."/>
            <person name="Tzermia M."/>
            <person name="Uhlen M."/>
            <person name="Unseld M."/>
            <person name="Valens M."/>
            <person name="Vandenbol M."/>
            <person name="Vetter I."/>
            <person name="Vlcek C."/>
            <person name="Voet M."/>
            <person name="Volckaert G."/>
            <person name="Voss H."/>
            <person name="Wambutt R."/>
            <person name="Wedler H."/>
            <person name="Wiemann S."/>
            <person name="Winsor B."/>
            <person name="Wolfe K.H."/>
            <person name="Zollner A."/>
            <person name="Zumstein E."/>
            <person name="Kleine K."/>
        </authorList>
    </citation>
    <scope>NUCLEOTIDE SEQUENCE [LARGE SCALE GENOMIC DNA]</scope>
    <source>
        <strain>ATCC 204508 / S288c</strain>
    </source>
</reference>
<reference key="3">
    <citation type="journal article" date="2014" name="G3 (Bethesda)">
        <title>The reference genome sequence of Saccharomyces cerevisiae: Then and now.</title>
        <authorList>
            <person name="Engel S.R."/>
            <person name="Dietrich F.S."/>
            <person name="Fisk D.G."/>
            <person name="Binkley G."/>
            <person name="Balakrishnan R."/>
            <person name="Costanzo M.C."/>
            <person name="Dwight S.S."/>
            <person name="Hitz B.C."/>
            <person name="Karra K."/>
            <person name="Nash R.S."/>
            <person name="Weng S."/>
            <person name="Wong E.D."/>
            <person name="Lloyd P."/>
            <person name="Skrzypek M.S."/>
            <person name="Miyasato S.R."/>
            <person name="Simison M."/>
            <person name="Cherry J.M."/>
        </authorList>
    </citation>
    <scope>GENOME REANNOTATION</scope>
    <source>
        <strain>ATCC 204508 / S288c</strain>
    </source>
</reference>
<reference key="4">
    <citation type="journal article" date="2001" name="Genetics">
        <title>A new hyperrecombination mutation identifies a novel yeast gene, THP1, connecting transcription elongation with mitotic recombination.</title>
        <authorList>
            <person name="Gallardo M."/>
            <person name="Aguilera A."/>
        </authorList>
    </citation>
    <scope>FUNCTION</scope>
</reference>
<reference key="5">
    <citation type="journal article" date="2002" name="EMBO J.">
        <title>The mRNA export machinery requires the novel Sac3p-Thp1p complex to dock at the nucleoplasmic entrance of the nuclear pores.</title>
        <authorList>
            <person name="Fischer T."/>
            <person name="Straesser K."/>
            <person name="Racz A."/>
            <person name="Rodriguez-Navarro S."/>
            <person name="Oppizzi M."/>
            <person name="Ihrig P."/>
            <person name="Lechner J."/>
            <person name="Hurt E."/>
        </authorList>
    </citation>
    <scope>FUNCTION</scope>
    <scope>INTERACTION WITH SAC3</scope>
    <scope>SUBCELLULAR LOCATION</scope>
</reference>
<reference key="6">
    <citation type="journal article" date="2002" name="J. Mol. Biol.">
        <title>Genome-wide nuclear morphology screen identifies novel genes involved in nuclear architecture and gene-silencing in Saccharomyces cerevisiae.</title>
        <authorList>
            <person name="Teixeira M.T."/>
            <person name="Dujon B."/>
            <person name="Fabre E."/>
        </authorList>
    </citation>
    <scope>SUBCELLULAR LOCATION</scope>
</reference>
<reference key="7">
    <citation type="journal article" date="2003" name="J. Biol. Chem.">
        <title>Nab2p and the Thp1p-Sac3p complex functionally interact at the interface between transcription and mRNA metabolism.</title>
        <authorList>
            <person name="Gallardo M."/>
            <person name="Luna R."/>
            <person name="Erdjument-Bromage H."/>
            <person name="Tempst P."/>
            <person name="Aguilera A."/>
        </authorList>
    </citation>
    <scope>FUNCTION</scope>
    <scope>RNA-BINDING</scope>
</reference>
<reference key="8">
    <citation type="journal article" date="2003" name="Nature">
        <title>Global analysis of protein localization in budding yeast.</title>
        <authorList>
            <person name="Huh W.-K."/>
            <person name="Falvo J.V."/>
            <person name="Gerke L.C."/>
            <person name="Carroll A.S."/>
            <person name="Howson R.W."/>
            <person name="Weissman J.S."/>
            <person name="O'Shea E.K."/>
        </authorList>
    </citation>
    <scope>SUBCELLULAR LOCATION [LARGE SCALE ANALYSIS]</scope>
</reference>
<reference key="9">
    <citation type="journal article" date="2003" name="Nature">
        <title>Global analysis of protein expression in yeast.</title>
        <authorList>
            <person name="Ghaemmaghami S."/>
            <person name="Huh W.-K."/>
            <person name="Bower K."/>
            <person name="Howson R.W."/>
            <person name="Belle A."/>
            <person name="Dephoure N."/>
            <person name="O'Shea E.K."/>
            <person name="Weissman J.S."/>
        </authorList>
    </citation>
    <scope>LEVEL OF PROTEIN EXPRESSION [LARGE SCALE ANALYSIS]</scope>
</reference>
<reference key="10">
    <citation type="journal article" date="2004" name="Cell">
        <title>Sus1, a functional component of the SAGA histone acetylase complex and the nuclear pore-associated mRNA export machinery.</title>
        <authorList>
            <person name="Rodriguez-Navarro S."/>
            <person name="Fischer T."/>
            <person name="Luo M.-J."/>
            <person name="Antunez O."/>
            <person name="Brettschneider S."/>
            <person name="Lechner J."/>
            <person name="Perez-Ortin J.E."/>
            <person name="Reed R."/>
            <person name="Hurt E.C."/>
        </authorList>
    </citation>
    <scope>INTERACTION WITH SUS1</scope>
</reference>
<reference key="11">
    <citation type="journal article" date="2004" name="Nat. Cell Biol.">
        <title>Yeast centrin Cdc31 is linked to the nuclear mRNA export machinery.</title>
        <authorList>
            <person name="Fischer T."/>
            <person name="Rodriguez-Navarro S."/>
            <person name="Pereira G."/>
            <person name="Racz A."/>
            <person name="Schiebel E."/>
            <person name="Hurt E.C."/>
        </authorList>
    </citation>
    <scope>INTERACTION WITH CDC31</scope>
</reference>
<dbReference type="EMBL" id="Z74814">
    <property type="protein sequence ID" value="CAA99082.1"/>
    <property type="molecule type" value="Genomic_DNA"/>
</dbReference>
<dbReference type="EMBL" id="BK006948">
    <property type="protein sequence ID" value="DAA10711.1"/>
    <property type="molecule type" value="Genomic_DNA"/>
</dbReference>
<dbReference type="PIR" id="S66765">
    <property type="entry name" value="S66765"/>
</dbReference>
<dbReference type="RefSeq" id="NP_014569.1">
    <property type="nucleotide sequence ID" value="NM_001183327.1"/>
</dbReference>
<dbReference type="PDB" id="3T5V">
    <property type="method" value="X-ray"/>
    <property type="resolution" value="2.90 A"/>
    <property type="chains" value="B/E=1-455"/>
</dbReference>
<dbReference type="PDB" id="4TRQ">
    <property type="method" value="X-ray"/>
    <property type="resolution" value="3.10 A"/>
    <property type="chains" value="B/E=170-455"/>
</dbReference>
<dbReference type="PDB" id="5G5P">
    <property type="method" value="EM"/>
    <property type="resolution" value="5.30 A"/>
    <property type="chains" value="B=1-455"/>
</dbReference>
<dbReference type="PDB" id="5L3T">
    <property type="method" value="X-ray"/>
    <property type="resolution" value="4.93 A"/>
    <property type="chains" value="B=1-455"/>
</dbReference>
<dbReference type="PDB" id="5UBP">
    <property type="method" value="X-ray"/>
    <property type="resolution" value="2.30 A"/>
    <property type="chains" value="B=1-455"/>
</dbReference>
<dbReference type="PDB" id="8U8D">
    <property type="method" value="EM"/>
    <property type="resolution" value="3.04 A"/>
    <property type="chains" value="B=1-455"/>
</dbReference>
<dbReference type="PDB" id="8U8E">
    <property type="method" value="EM"/>
    <property type="resolution" value="3.33 A"/>
    <property type="chains" value="B=1-455"/>
</dbReference>
<dbReference type="PDBsum" id="3T5V"/>
<dbReference type="PDBsum" id="4TRQ"/>
<dbReference type="PDBsum" id="5G5P"/>
<dbReference type="PDBsum" id="5L3T"/>
<dbReference type="PDBsum" id="5UBP"/>
<dbReference type="PDBsum" id="8U8D"/>
<dbReference type="PDBsum" id="8U8E"/>
<dbReference type="EMDB" id="EMD-3440"/>
<dbReference type="SMR" id="Q08231"/>
<dbReference type="BioGRID" id="34329">
    <property type="interactions" value="175"/>
</dbReference>
<dbReference type="ComplexPortal" id="CPX-1686">
    <property type="entry name" value="TREX-2 transcription-export complex"/>
</dbReference>
<dbReference type="ComplexPortal" id="CPX-1687">
    <property type="entry name" value="Thp1-Sac3 complex"/>
</dbReference>
<dbReference type="DIP" id="DIP-5060N"/>
<dbReference type="FunCoup" id="Q08231">
    <property type="interactions" value="140"/>
</dbReference>
<dbReference type="IntAct" id="Q08231">
    <property type="interactions" value="7"/>
</dbReference>
<dbReference type="MINT" id="Q08231"/>
<dbReference type="STRING" id="4932.YOL072W"/>
<dbReference type="TCDB" id="3.A.22.1.1">
    <property type="family name" value="the transcription-coupled trex/tap nuclear mrna export complex (trex) family"/>
</dbReference>
<dbReference type="PaxDb" id="4932-YOL072W"/>
<dbReference type="PeptideAtlas" id="Q08231"/>
<dbReference type="EnsemblFungi" id="YOL072W_mRNA">
    <property type="protein sequence ID" value="YOL072W"/>
    <property type="gene ID" value="YOL072W"/>
</dbReference>
<dbReference type="GeneID" id="854082"/>
<dbReference type="KEGG" id="sce:YOL072W"/>
<dbReference type="AGR" id="SGD:S000005433"/>
<dbReference type="SGD" id="S000005433">
    <property type="gene designation" value="THP1"/>
</dbReference>
<dbReference type="VEuPathDB" id="FungiDB:YOL072W"/>
<dbReference type="eggNOG" id="KOG2688">
    <property type="taxonomic scope" value="Eukaryota"/>
</dbReference>
<dbReference type="GeneTree" id="ENSGT00390000001101"/>
<dbReference type="HOGENOM" id="CLU_048936_0_0_1"/>
<dbReference type="InParanoid" id="Q08231"/>
<dbReference type="OMA" id="PQLCSNI"/>
<dbReference type="OrthoDB" id="5404651at2759"/>
<dbReference type="BioCyc" id="YEAST:G3O-33477-MONOMER"/>
<dbReference type="BioGRID-ORCS" id="854082">
    <property type="hits" value="6 hits in 10 CRISPR screens"/>
</dbReference>
<dbReference type="EvolutionaryTrace" id="Q08231"/>
<dbReference type="PRO" id="PR:Q08231"/>
<dbReference type="Proteomes" id="UP000002311">
    <property type="component" value="Chromosome XV"/>
</dbReference>
<dbReference type="RNAct" id="Q08231">
    <property type="molecule type" value="protein"/>
</dbReference>
<dbReference type="GO" id="GO:0005635">
    <property type="term" value="C:nuclear envelope"/>
    <property type="evidence" value="ECO:0000314"/>
    <property type="project" value="SGD"/>
</dbReference>
<dbReference type="GO" id="GO:0005634">
    <property type="term" value="C:nucleus"/>
    <property type="evidence" value="ECO:0000314"/>
    <property type="project" value="SGD"/>
</dbReference>
<dbReference type="GO" id="GO:0070390">
    <property type="term" value="C:transcription export complex 2"/>
    <property type="evidence" value="ECO:0000314"/>
    <property type="project" value="SGD"/>
</dbReference>
<dbReference type="GO" id="GO:0003690">
    <property type="term" value="F:double-stranded DNA binding"/>
    <property type="evidence" value="ECO:0000314"/>
    <property type="project" value="SGD"/>
</dbReference>
<dbReference type="GO" id="GO:0003723">
    <property type="term" value="F:RNA binding"/>
    <property type="evidence" value="ECO:0000314"/>
    <property type="project" value="SGD"/>
</dbReference>
<dbReference type="GO" id="GO:0000282">
    <property type="term" value="P:cellular bud site selection"/>
    <property type="evidence" value="ECO:0007001"/>
    <property type="project" value="SGD"/>
</dbReference>
<dbReference type="GO" id="GO:0031124">
    <property type="term" value="P:mRNA 3'-end processing"/>
    <property type="evidence" value="ECO:0000315"/>
    <property type="project" value="SGD"/>
</dbReference>
<dbReference type="GO" id="GO:0006406">
    <property type="term" value="P:mRNA export from nucleus"/>
    <property type="evidence" value="ECO:0000315"/>
    <property type="project" value="SGD"/>
</dbReference>
<dbReference type="GO" id="GO:0071028">
    <property type="term" value="P:nuclear mRNA surveillance"/>
    <property type="evidence" value="ECO:0000315"/>
    <property type="project" value="SGD"/>
</dbReference>
<dbReference type="GO" id="GO:0016973">
    <property type="term" value="P:poly(A)+ mRNA export from nucleus"/>
    <property type="evidence" value="ECO:0000318"/>
    <property type="project" value="GO_Central"/>
</dbReference>
<dbReference type="GO" id="GO:0045944">
    <property type="term" value="P:positive regulation of transcription by RNA polymerase II"/>
    <property type="evidence" value="ECO:0000303"/>
    <property type="project" value="ComplexPortal"/>
</dbReference>
<dbReference type="GO" id="GO:0000973">
    <property type="term" value="P:post-transcriptional tethering of RNA polymerase II gene DNA at nuclear periphery"/>
    <property type="evidence" value="ECO:0000315"/>
    <property type="project" value="SGD"/>
</dbReference>
<dbReference type="GO" id="GO:0006368">
    <property type="term" value="P:transcription elongation by RNA polymerase II"/>
    <property type="evidence" value="ECO:0000315"/>
    <property type="project" value="SGD"/>
</dbReference>
<dbReference type="GO" id="GO:0006283">
    <property type="term" value="P:transcription-coupled nucleotide-excision repair"/>
    <property type="evidence" value="ECO:0000315"/>
    <property type="project" value="SGD"/>
</dbReference>
<dbReference type="InterPro" id="IPR045114">
    <property type="entry name" value="Csn12-like"/>
</dbReference>
<dbReference type="InterPro" id="IPR000717">
    <property type="entry name" value="PCI_dom"/>
</dbReference>
<dbReference type="PANTHER" id="PTHR12732:SF8">
    <property type="entry name" value="NUCLEAR MRNA EXPORT PROTEIN THP1"/>
    <property type="match status" value="1"/>
</dbReference>
<dbReference type="PANTHER" id="PTHR12732">
    <property type="entry name" value="UNCHARACTERIZED PROTEASOME COMPONENT REGION PCI-CONTAINING"/>
    <property type="match status" value="1"/>
</dbReference>
<dbReference type="Pfam" id="PF01399">
    <property type="entry name" value="PCI"/>
    <property type="match status" value="1"/>
</dbReference>
<dbReference type="SMART" id="SM00753">
    <property type="entry name" value="PAM"/>
    <property type="match status" value="1"/>
</dbReference>
<dbReference type="PROSITE" id="PS50250">
    <property type="entry name" value="PCI"/>
    <property type="match status" value="1"/>
</dbReference>
<keyword id="KW-0002">3D-structure</keyword>
<keyword id="KW-0509">mRNA transport</keyword>
<keyword id="KW-0539">Nucleus</keyword>
<keyword id="KW-1185">Reference proteome</keyword>
<keyword id="KW-0813">Transport</keyword>
<protein>
    <recommendedName>
        <fullName>Nuclear mRNA export protein THP1</fullName>
    </recommendedName>
    <alternativeName>
        <fullName>Bud site selection protein 29</fullName>
    </alternativeName>
</protein>
<sequence length="455" mass="52678">MDMANQLLDELAHGNFSHLTLNLSQNGREIAILQKQLTGFDDKQLETFVEQHPAMPNDTRFKIMCTSFLNYARDVDPWSAWSSSDLIFEFYQCLINCLINDNAPHIEMLIPVATRETEFIINLAGKLDSFHLQLHTRSHQFLSHISSILSRLFNSIKPPRGNASSTNIPGKQRILLYLVNKLNNIYFRIESPQLCSNIFKNFQPKSMLAHFNEYQLDQQIEYRYLLGRYYLLNSQVHNAFVQFNEAFQSLLNLPLTNQAITRNGTRILNYMIPTGLILGKMVKWGPLRPFLSQETIDNWSVLYKHVRYGNIQGVSLWLRQNERHLCARQLLIVLLEKLPMVTYRNLIKTVIKSWTTEWGQNKLPYSLIERVLQLSIGPTFEDPGAQEITIYNGIHSPKNVENVLVTLINLGLLRANCFPQLQLCVVKKTTMIQEIVPPVNERITKMFPAHSHVLW</sequence>
<accession>Q08231</accession>
<accession>D6W1Z5</accession>
<name>THP1_YEAST</name>
<feature type="chain" id="PRO_0000270618" description="Nuclear mRNA export protein THP1">
    <location>
        <begin position="1"/>
        <end position="455"/>
    </location>
</feature>
<feature type="domain" description="PCI" evidence="1">
    <location>
        <begin position="220"/>
        <end position="431"/>
    </location>
</feature>
<feature type="helix" evidence="12">
    <location>
        <begin position="3"/>
        <end position="12"/>
    </location>
</feature>
<feature type="helix" evidence="12">
    <location>
        <begin position="23"/>
        <end position="37"/>
    </location>
</feature>
<feature type="helix" evidence="12">
    <location>
        <begin position="42"/>
        <end position="51"/>
    </location>
</feature>
<feature type="helix" evidence="12">
    <location>
        <begin position="59"/>
        <end position="74"/>
    </location>
</feature>
<feature type="helix" evidence="12">
    <location>
        <begin position="80"/>
        <end position="96"/>
    </location>
</feature>
<feature type="strand" evidence="10">
    <location>
        <begin position="98"/>
        <end position="100"/>
    </location>
</feature>
<feature type="helix" evidence="12">
    <location>
        <begin position="106"/>
        <end position="128"/>
    </location>
</feature>
<feature type="helix" evidence="12">
    <location>
        <begin position="131"/>
        <end position="134"/>
    </location>
</feature>
<feature type="helix" evidence="12">
    <location>
        <begin position="140"/>
        <end position="155"/>
    </location>
</feature>
<feature type="helix" evidence="12">
    <location>
        <begin position="170"/>
        <end position="173"/>
    </location>
</feature>
<feature type="helix" evidence="12">
    <location>
        <begin position="175"/>
        <end position="188"/>
    </location>
</feature>
<feature type="helix" evidence="12">
    <location>
        <begin position="192"/>
        <end position="194"/>
    </location>
</feature>
<feature type="helix" evidence="12">
    <location>
        <begin position="195"/>
        <end position="205"/>
    </location>
</feature>
<feature type="helix" evidence="12">
    <location>
        <begin position="211"/>
        <end position="213"/>
    </location>
</feature>
<feature type="helix" evidence="12">
    <location>
        <begin position="216"/>
        <end position="232"/>
    </location>
</feature>
<feature type="helix" evidence="12">
    <location>
        <begin position="236"/>
        <end position="251"/>
    </location>
</feature>
<feature type="helix" evidence="12">
    <location>
        <begin position="258"/>
        <end position="277"/>
    </location>
</feature>
<feature type="helix" evidence="12">
    <location>
        <begin position="285"/>
        <end position="290"/>
    </location>
</feature>
<feature type="helix" evidence="12">
    <location>
        <begin position="293"/>
        <end position="308"/>
    </location>
</feature>
<feature type="helix" evidence="12">
    <location>
        <begin position="311"/>
        <end position="320"/>
    </location>
</feature>
<feature type="helix" evidence="12">
    <location>
        <begin position="322"/>
        <end position="327"/>
    </location>
</feature>
<feature type="helix" evidence="12">
    <location>
        <begin position="331"/>
        <end position="354"/>
    </location>
</feature>
<feature type="turn" evidence="12">
    <location>
        <begin position="355"/>
        <end position="358"/>
    </location>
</feature>
<feature type="strand" evidence="12">
    <location>
        <begin position="362"/>
        <end position="364"/>
    </location>
</feature>
<feature type="helix" evidence="12">
    <location>
        <begin position="365"/>
        <end position="376"/>
    </location>
</feature>
<feature type="turn" evidence="12">
    <location>
        <begin position="390"/>
        <end position="392"/>
    </location>
</feature>
<feature type="helix" evidence="11">
    <location>
        <begin position="397"/>
        <end position="399"/>
    </location>
</feature>
<feature type="helix" evidence="12">
    <location>
        <begin position="400"/>
        <end position="409"/>
    </location>
</feature>
<feature type="strand" evidence="12">
    <location>
        <begin position="416"/>
        <end position="418"/>
    </location>
</feature>
<feature type="turn" evidence="12">
    <location>
        <begin position="419"/>
        <end position="422"/>
    </location>
</feature>
<feature type="strand" evidence="12">
    <location>
        <begin position="423"/>
        <end position="425"/>
    </location>
</feature>
<feature type="helix" evidence="12">
    <location>
        <begin position="432"/>
        <end position="435"/>
    </location>
</feature>
<feature type="helix" evidence="12">
    <location>
        <begin position="439"/>
        <end position="446"/>
    </location>
</feature>
<evidence type="ECO:0000255" key="1">
    <source>
        <dbReference type="PROSITE-ProRule" id="PRU01185"/>
    </source>
</evidence>
<evidence type="ECO:0000269" key="2">
    <source>
    </source>
</evidence>
<evidence type="ECO:0000269" key="3">
    <source>
    </source>
</evidence>
<evidence type="ECO:0000269" key="4">
    <source>
    </source>
</evidence>
<evidence type="ECO:0000269" key="5">
    <source>
    </source>
</evidence>
<evidence type="ECO:0000269" key="6">
    <source>
    </source>
</evidence>
<evidence type="ECO:0000269" key="7">
    <source>
    </source>
</evidence>
<evidence type="ECO:0000269" key="8">
    <source>
    </source>
</evidence>
<evidence type="ECO:0000269" key="9">
    <source>
    </source>
</evidence>
<evidence type="ECO:0007829" key="10">
    <source>
        <dbReference type="PDB" id="3T5V"/>
    </source>
</evidence>
<evidence type="ECO:0007829" key="11">
    <source>
        <dbReference type="PDB" id="4TRQ"/>
    </source>
</evidence>
<evidence type="ECO:0007829" key="12">
    <source>
        <dbReference type="PDB" id="5UBP"/>
    </source>
</evidence>
<comment type="function">
    <text evidence="2 4 5">Component of the SAC3-THP1 complex, which functions in transcription-coupled mRNA export from the nucleus to the cytoplasm. SAC3-THP1 functions in docking export-competent ribonucleoprotein particles (mRNPs) to the nuclear entrance of the nuclear pore complex (nuclear basket), by association with components of the nuclear mRNA export machinery (MEX67-MTR2 and SUB2) in the nucleoplasm and the nucleoporin NUP1 at the nuclear basket. THP1 binds to RNA in vitro.</text>
</comment>
<comment type="subunit">
    <text evidence="4 8 9">Heterodimer with THP1. The SAC3-THP1 complex interacts with CDC31 and SUS1, and with the mRNA export factor MEX67-MTR2, the TREX complex component SUB2, and the nucleoporin NUP1.</text>
</comment>
<comment type="interaction">
    <interactant intactId="EBI-32097">
        <id>Q08231</id>
    </interactant>
    <interactant intactId="EBI-4259">
        <id>P06704</id>
        <label>CDC31</label>
    </interactant>
    <organismsDiffer>false</organismsDiffer>
    <experiments>4</experiments>
</comment>
<comment type="interaction">
    <interactant intactId="EBI-32097">
        <id>Q08231</id>
    </interactant>
    <interactant intactId="EBI-31337">
        <id>O94742</id>
        <label>SEM1</label>
    </interactant>
    <organismsDiffer>false</organismsDiffer>
    <experiments>2</experiments>
</comment>
<comment type="subcellular location">
    <subcellularLocation>
        <location evidence="3 4 6">Nucleus envelope</location>
    </subcellularLocation>
    <text>Localizes to the nuclear pores.</text>
</comment>
<comment type="miscellaneous">
    <text evidence="7">Present with 1140 molecules/cell in log phase SD medium.</text>
</comment>
<gene>
    <name type="primary">THP1</name>
    <name type="synonym">BUD29</name>
    <name type="ordered locus">YOL072W</name>
    <name type="ORF">O1140</name>
</gene>